<name>NUOA_COXBN</name>
<evidence type="ECO:0000255" key="1">
    <source>
        <dbReference type="HAMAP-Rule" id="MF_01394"/>
    </source>
</evidence>
<sequence>MLVLANYFPILVFLGISLFIAVLALTMGWFFGPRRPDKAKLSPYECGFEAFQDARLPFDVRFYLVAILFIIFDLETAFLFPWAVVLRHIGWFGFWAMMVFLAILVVGFIYEWKRGALEWE</sequence>
<accession>A9KBK4</accession>
<comment type="function">
    <text evidence="1">NDH-1 shuttles electrons from NADH, via FMN and iron-sulfur (Fe-S) centers, to quinones in the respiratory chain. The immediate electron acceptor for the enzyme in this species is believed to be ubiquinone. Couples the redox reaction to proton translocation (for every two electrons transferred, four hydrogen ions are translocated across the cytoplasmic membrane), and thus conserves the redox energy in a proton gradient.</text>
</comment>
<comment type="catalytic activity">
    <reaction evidence="1">
        <text>a quinone + NADH + 5 H(+)(in) = a quinol + NAD(+) + 4 H(+)(out)</text>
        <dbReference type="Rhea" id="RHEA:57888"/>
        <dbReference type="ChEBI" id="CHEBI:15378"/>
        <dbReference type="ChEBI" id="CHEBI:24646"/>
        <dbReference type="ChEBI" id="CHEBI:57540"/>
        <dbReference type="ChEBI" id="CHEBI:57945"/>
        <dbReference type="ChEBI" id="CHEBI:132124"/>
    </reaction>
</comment>
<comment type="subunit">
    <text evidence="1">NDH-1 is composed of 14 different subunits. Subunits NuoA, H, J, K, L, M, N constitute the membrane sector of the complex.</text>
</comment>
<comment type="subcellular location">
    <subcellularLocation>
        <location evidence="1">Cell inner membrane</location>
        <topology evidence="1">Multi-pass membrane protein</topology>
    </subcellularLocation>
</comment>
<comment type="similarity">
    <text evidence="1">Belongs to the complex I subunit 3 family.</text>
</comment>
<proteinExistence type="inferred from homology"/>
<organism>
    <name type="scientific">Coxiella burnetii (strain Dugway 5J108-111)</name>
    <dbReference type="NCBI Taxonomy" id="434922"/>
    <lineage>
        <taxon>Bacteria</taxon>
        <taxon>Pseudomonadati</taxon>
        <taxon>Pseudomonadota</taxon>
        <taxon>Gammaproteobacteria</taxon>
        <taxon>Legionellales</taxon>
        <taxon>Coxiellaceae</taxon>
        <taxon>Coxiella</taxon>
    </lineage>
</organism>
<reference key="1">
    <citation type="journal article" date="2009" name="Infect. Immun.">
        <title>Comparative genomics reveal extensive transposon-mediated genomic plasticity and diversity among potential effector proteins within the genus Coxiella.</title>
        <authorList>
            <person name="Beare P.A."/>
            <person name="Unsworth N."/>
            <person name="Andoh M."/>
            <person name="Voth D.E."/>
            <person name="Omsland A."/>
            <person name="Gilk S.D."/>
            <person name="Williams K.P."/>
            <person name="Sobral B.W."/>
            <person name="Kupko J.J. III"/>
            <person name="Porcella S.F."/>
            <person name="Samuel J.E."/>
            <person name="Heinzen R.A."/>
        </authorList>
    </citation>
    <scope>NUCLEOTIDE SEQUENCE [LARGE SCALE GENOMIC DNA]</scope>
    <source>
        <strain>Dugway 5J108-111</strain>
    </source>
</reference>
<feature type="chain" id="PRO_0000362667" description="NADH-quinone oxidoreductase subunit A">
    <location>
        <begin position="1"/>
        <end position="120"/>
    </location>
</feature>
<feature type="transmembrane region" description="Helical" evidence="1">
    <location>
        <begin position="10"/>
        <end position="30"/>
    </location>
</feature>
<feature type="transmembrane region" description="Helical" evidence="1">
    <location>
        <begin position="65"/>
        <end position="85"/>
    </location>
</feature>
<feature type="transmembrane region" description="Helical" evidence="1">
    <location>
        <begin position="89"/>
        <end position="109"/>
    </location>
</feature>
<keyword id="KW-0997">Cell inner membrane</keyword>
<keyword id="KW-1003">Cell membrane</keyword>
<keyword id="KW-0472">Membrane</keyword>
<keyword id="KW-0520">NAD</keyword>
<keyword id="KW-0874">Quinone</keyword>
<keyword id="KW-1278">Translocase</keyword>
<keyword id="KW-0812">Transmembrane</keyword>
<keyword id="KW-1133">Transmembrane helix</keyword>
<keyword id="KW-0813">Transport</keyword>
<keyword id="KW-0830">Ubiquinone</keyword>
<gene>
    <name evidence="1" type="primary">nuoA</name>
    <name type="ordered locus">CBUD_0545</name>
</gene>
<protein>
    <recommendedName>
        <fullName evidence="1">NADH-quinone oxidoreductase subunit A</fullName>
        <ecNumber evidence="1">7.1.1.-</ecNumber>
    </recommendedName>
    <alternativeName>
        <fullName evidence="1">NADH dehydrogenase I subunit A</fullName>
    </alternativeName>
    <alternativeName>
        <fullName evidence="1">NDH-1 subunit A</fullName>
    </alternativeName>
    <alternativeName>
        <fullName evidence="1">NUO1</fullName>
    </alternativeName>
</protein>
<dbReference type="EC" id="7.1.1.-" evidence="1"/>
<dbReference type="EMBL" id="CP000733">
    <property type="protein sequence ID" value="ABS77261.2"/>
    <property type="molecule type" value="Genomic_DNA"/>
</dbReference>
<dbReference type="RefSeq" id="WP_010958235.1">
    <property type="nucleotide sequence ID" value="NC_009727.1"/>
</dbReference>
<dbReference type="SMR" id="A9KBK4"/>
<dbReference type="KEGG" id="cbd:CBUD_0545"/>
<dbReference type="HOGENOM" id="CLU_119549_3_1_6"/>
<dbReference type="Proteomes" id="UP000008555">
    <property type="component" value="Chromosome"/>
</dbReference>
<dbReference type="GO" id="GO:0030964">
    <property type="term" value="C:NADH dehydrogenase complex"/>
    <property type="evidence" value="ECO:0007669"/>
    <property type="project" value="TreeGrafter"/>
</dbReference>
<dbReference type="GO" id="GO:0005886">
    <property type="term" value="C:plasma membrane"/>
    <property type="evidence" value="ECO:0007669"/>
    <property type="project" value="UniProtKB-SubCell"/>
</dbReference>
<dbReference type="GO" id="GO:0008137">
    <property type="term" value="F:NADH dehydrogenase (ubiquinone) activity"/>
    <property type="evidence" value="ECO:0007669"/>
    <property type="project" value="InterPro"/>
</dbReference>
<dbReference type="GO" id="GO:0050136">
    <property type="term" value="F:NADH:ubiquinone reductase (non-electrogenic) activity"/>
    <property type="evidence" value="ECO:0007669"/>
    <property type="project" value="UniProtKB-UniRule"/>
</dbReference>
<dbReference type="GO" id="GO:0048038">
    <property type="term" value="F:quinone binding"/>
    <property type="evidence" value="ECO:0007669"/>
    <property type="project" value="UniProtKB-KW"/>
</dbReference>
<dbReference type="FunFam" id="1.20.58.1610:FF:000004">
    <property type="entry name" value="NADH-quinone oxidoreductase subunit A"/>
    <property type="match status" value="1"/>
</dbReference>
<dbReference type="Gene3D" id="1.20.58.1610">
    <property type="entry name" value="NADH:ubiquinone/plastoquinone oxidoreductase, chain 3"/>
    <property type="match status" value="1"/>
</dbReference>
<dbReference type="HAMAP" id="MF_01394">
    <property type="entry name" value="NDH1_NuoA"/>
    <property type="match status" value="1"/>
</dbReference>
<dbReference type="InterPro" id="IPR023043">
    <property type="entry name" value="NAD(P)H_OxRDtase_bac/plastid"/>
</dbReference>
<dbReference type="InterPro" id="IPR000440">
    <property type="entry name" value="NADH_UbQ/plastoQ_OxRdtase_su3"/>
</dbReference>
<dbReference type="InterPro" id="IPR038430">
    <property type="entry name" value="NDAH_ubi_oxred_su3_sf"/>
</dbReference>
<dbReference type="PANTHER" id="PTHR11058">
    <property type="entry name" value="NADH-UBIQUINONE OXIDOREDUCTASE CHAIN 3"/>
    <property type="match status" value="1"/>
</dbReference>
<dbReference type="PANTHER" id="PTHR11058:SF9">
    <property type="entry name" value="NADH-UBIQUINONE OXIDOREDUCTASE CHAIN 3"/>
    <property type="match status" value="1"/>
</dbReference>
<dbReference type="Pfam" id="PF00507">
    <property type="entry name" value="Oxidored_q4"/>
    <property type="match status" value="1"/>
</dbReference>